<accession>A0A4P8WAJ7</accession>
<dbReference type="EC" id="2.3.1.-" evidence="8"/>
<dbReference type="EMBL" id="MK801691">
    <property type="protein sequence ID" value="QCS37519.1"/>
    <property type="molecule type" value="Genomic_DNA"/>
</dbReference>
<dbReference type="SMR" id="A0A4P8WAJ7"/>
<dbReference type="GlyCosmos" id="A0A4P8WAJ7">
    <property type="glycosylation" value="3 sites, No reported glycans"/>
</dbReference>
<dbReference type="OrthoDB" id="21502at2759"/>
<dbReference type="Proteomes" id="UP000515153">
    <property type="component" value="Unplaced"/>
</dbReference>
<dbReference type="GO" id="GO:0016747">
    <property type="term" value="F:acyltransferase activity, transferring groups other than amino-acyl groups"/>
    <property type="evidence" value="ECO:0007669"/>
    <property type="project" value="TreeGrafter"/>
</dbReference>
<dbReference type="Gene3D" id="3.30.559.10">
    <property type="entry name" value="Chloramphenicol acetyltransferase-like domain"/>
    <property type="match status" value="2"/>
</dbReference>
<dbReference type="InterPro" id="IPR023213">
    <property type="entry name" value="CAT-like_dom_sf"/>
</dbReference>
<dbReference type="InterPro" id="IPR050317">
    <property type="entry name" value="Plant_Fungal_Acyltransferase"/>
</dbReference>
<dbReference type="PANTHER" id="PTHR31642:SF310">
    <property type="entry name" value="FATTY ALCOHOL:CAFFEOYL-COA ACYLTRANSFERASE"/>
    <property type="match status" value="1"/>
</dbReference>
<dbReference type="PANTHER" id="PTHR31642">
    <property type="entry name" value="TRICHOTHECENE 3-O-ACETYLTRANSFERASE"/>
    <property type="match status" value="1"/>
</dbReference>
<evidence type="ECO:0000250" key="1">
    <source>
        <dbReference type="UniProtKB" id="Q70PR7"/>
    </source>
</evidence>
<evidence type="ECO:0000255" key="2"/>
<evidence type="ECO:0000255" key="3">
    <source>
        <dbReference type="PROSITE-ProRule" id="PRU00498"/>
    </source>
</evidence>
<evidence type="ECO:0000269" key="4">
    <source>
    </source>
</evidence>
<evidence type="ECO:0000269" key="5">
    <source>
    </source>
</evidence>
<evidence type="ECO:0000303" key="6">
    <source>
    </source>
</evidence>
<evidence type="ECO:0000305" key="7"/>
<evidence type="ECO:0000305" key="8">
    <source>
    </source>
</evidence>
<evidence type="ECO:0000305" key="9">
    <source>
    </source>
</evidence>
<proteinExistence type="inferred from homology"/>
<gene>
    <name evidence="6" type="primary">pyiB</name>
</gene>
<organism>
    <name type="scientific">Pyricularia grisea</name>
    <name type="common">Crabgrass-specific blast fungus</name>
    <name type="synonym">Magnaporthe grisea</name>
    <dbReference type="NCBI Taxonomy" id="148305"/>
    <lineage>
        <taxon>Eukaryota</taxon>
        <taxon>Fungi</taxon>
        <taxon>Dikarya</taxon>
        <taxon>Ascomycota</taxon>
        <taxon>Pezizomycotina</taxon>
        <taxon>Sordariomycetes</taxon>
        <taxon>Sordariomycetidae</taxon>
        <taxon>Magnaporthales</taxon>
        <taxon>Pyriculariaceae</taxon>
        <taxon>Pyricularia</taxon>
    </lineage>
</organism>
<protein>
    <recommendedName>
        <fullName evidence="6">Acetyltransferase pyiB</fullName>
        <ecNumber evidence="8">2.3.1.-</ecNumber>
    </recommendedName>
    <alternativeName>
        <fullName evidence="6">Pyrichalasin H biosynthesis cluster protein B</fullName>
    </alternativeName>
</protein>
<reference key="1">
    <citation type="journal article" date="2019" name="Org. Lett.">
        <title>Targeted gene inactivations expose silent cytochalasans in Magnaporthe grisea NI980.</title>
        <authorList>
            <person name="Wang C."/>
            <person name="Hantke V."/>
            <person name="Cox R.J."/>
            <person name="Skellam E."/>
        </authorList>
    </citation>
    <scope>NUCLEOTIDE SEQUENCE [GENOMIC DNA]</scope>
    <scope>FUNCTION</scope>
    <scope>DISRUPTION PHENOTYPE</scope>
    <scope>PATHWAY</scope>
    <source>
        <strain>NI980</strain>
    </source>
</reference>
<reference key="2">
    <citation type="journal article" date="2019" name="Org. Lett.">
        <title>Investigating the function of cryptic cytochalasan cytochrome P450 monooxygenases using combinatorial biosynthesis.</title>
        <authorList>
            <person name="Wang C."/>
            <person name="Becker K."/>
            <person name="Pfuetze S."/>
            <person name="Kuhnert E."/>
            <person name="Stadler M."/>
            <person name="Cox R.J."/>
            <person name="Skellam E."/>
        </authorList>
    </citation>
    <scope>FUNCTION</scope>
</reference>
<reference key="3">
    <citation type="journal article" date="2020" name="Chem. Commun. (Camb.)">
        <title>Evidence for enzyme catalysed intramolecular [4+2] Diels-Alder cyclization during the biosynthesis of pyrichalasin H.</title>
        <authorList>
            <person name="Hantke V."/>
            <person name="Skellam E.J."/>
            <person name="Cox R.J."/>
        </authorList>
    </citation>
    <scope>FUNCTION</scope>
</reference>
<comment type="function">
    <text evidence="4 5 9">Acetyltransferase; part of the gene cluster that mediates the biosynthesis of the mycotoxin pyrichalasin H, a tyrosine-derived cytochalasan that inhibits the growth of rice seedlings, but also inhibits lymphocyte capping and actin polymerization and alters cell morphology (Probable) (PubMed:31099577). Pyrichalasin H is indicated as the responsible agent for the genus-specific pathogenicity of M.grisea toward crabgrass (PubMed:31099577). The first step in the pathway is catalyzed by the O-methyltransferase pyiA which methylates free tyrosine to generate the precursor O-methyltyrosine (PubMed:31099577). The hybrid PKS-NRPS pyiS, assisted by the enoyl reductase pyiC, are responsible for fusion of the O-methyltyrosine precursor and the polyketide backbone (PubMed:31099577). The polyketide synthase module (PKS) of pyiS is responsible for the synthesis of the polyketide backbone and the downstream nonribosomal peptide synthetase (NRPS) amidates the carboxyl end of the polyketide with the O-methyltyrosine precursor (PubMed:31099577). As the NRPS A-domain demonstrates substrate tolerance, pyiS can also use phenylalanine, tyrosine and even para-chlorophenylalanine as amino acid precursor, which leads to the production of novel cytochalasans, including halogenated cytochalasans (PubMed:31099577). Because pyiS lacks a designated enoylreductase (ER) domain, the required activity is provided the enoyl reductase pyiC (PubMed:31099577). Reduction by the hydrolyase pyiE leads to 1,5-dihydropyrrolone, which is substrate for dehydration and intra-molecular Diels-Alder cyclization by the Diels-Alderase pyiF to yield the required isoindolone-fused macrocycle (PubMed:32039410). The tailoring cytochrome P450 monooxygenases piyD and piyG catalyze the hydroxylation at C-18 and C-7, respectivily, whereas the short-chain dehydrogenase/reductase pyiH reduces the carbonyl at C-21 in preparation for the transfer of an acetyl group by the acetyltransferase pyiB (PubMed:31099577). These 3 reactions whose order is not clear yet, lead to the production of O-methylpyrichalasin J, a deacetylated pyrichalasin H (PubMed:31099577). Finally, pyiB to converts O-methylpyrichalasin J into the final product pyrichalasin H via acetylation of C-21 (PubMed:31099577).</text>
</comment>
<comment type="pathway">
    <text evidence="8">Mycotoxin biosynthesis.</text>
</comment>
<comment type="disruption phenotype">
    <text evidence="4">Leads to the loss of pyrichalasin H production, but still produces deacetylated pyrichalasin H.</text>
</comment>
<comment type="similarity">
    <text evidence="7">Belongs to the plant acyltransferase family.</text>
</comment>
<sequence length="504" mass="56597">MGFLSAGGLWASLFRARISPIVETDEVLPLTLIDNIAAARNAILSEVIRFDQVLDVVKLRDGLTELIDKRGWRKLGGRLRLRPNGSLEIHVPREFTEERPAFRFTSQAFDIAIEEHALGSQLPKLSDGPSLQPGSTSVDKFNLIPDKPEKLDDYVYSDRPILALHVTSFTNSCIVTLTWSHVVFGARGIKELIAAWSKVLHGEQNVPLLLGTHQDVLAGIGTDGDKTAPFLLDPIKIKGLGLVRIIFGLLWEIWQHPTVETRALHLPKRFVSQLRQKCMEELGAFCREDPAPFISEGDVLEAWCSRFVAQARADEKPALVTNALDIKDRLTAPWSSRGEYLQNTGCCTWTPVQPETLLRSPLGELAYVIRRSIQELATDDQLRAQLRIFRSLGHTKMLPLFGNPNSRVISFSNWTKFNLFEVTNLGPAVISTSPSTRSDASTSPIGRPVYMHCEAAGDSRMLRNCFNVTGKDWDGSYWITAHLYPEDWTKLEEYMRQTQQHISD</sequence>
<name>PYIB_PYRGI</name>
<keyword id="KW-0012">Acyltransferase</keyword>
<keyword id="KW-0325">Glycoprotein</keyword>
<keyword id="KW-1185">Reference proteome</keyword>
<keyword id="KW-0732">Signal</keyword>
<keyword id="KW-0808">Transferase</keyword>
<feature type="signal peptide" evidence="2">
    <location>
        <begin position="1"/>
        <end position="18"/>
    </location>
</feature>
<feature type="chain" id="PRO_0000449449" description="Acetyltransferase pyiB">
    <location>
        <begin position="19"/>
        <end position="504"/>
    </location>
</feature>
<feature type="active site" description="Proton acceptor" evidence="1">
    <location>
        <position position="181"/>
    </location>
</feature>
<feature type="glycosylation site" description="N-linked (GlcNAc...) asparagine" evidence="3">
    <location>
        <position position="84"/>
    </location>
</feature>
<feature type="glycosylation site" description="N-linked (GlcNAc...) asparagine" evidence="3">
    <location>
        <position position="413"/>
    </location>
</feature>
<feature type="glycosylation site" description="N-linked (GlcNAc...) asparagine" evidence="3">
    <location>
        <position position="467"/>
    </location>
</feature>